<reference key="1">
    <citation type="journal article" date="2005" name="J. Bacteriol.">
        <title>Whole-genome sequence analysis of Pseudomonas syringae pv. phaseolicola 1448A reveals divergence among pathovars in genes involved in virulence and transposition.</title>
        <authorList>
            <person name="Joardar V."/>
            <person name="Lindeberg M."/>
            <person name="Jackson R.W."/>
            <person name="Selengut J."/>
            <person name="Dodson R."/>
            <person name="Brinkac L.M."/>
            <person name="Daugherty S.C."/>
            <person name="DeBoy R.T."/>
            <person name="Durkin A.S."/>
            <person name="Gwinn Giglio M."/>
            <person name="Madupu R."/>
            <person name="Nelson W.C."/>
            <person name="Rosovitz M.J."/>
            <person name="Sullivan S.A."/>
            <person name="Crabtree J."/>
            <person name="Creasy T."/>
            <person name="Davidsen T.M."/>
            <person name="Haft D.H."/>
            <person name="Zafar N."/>
            <person name="Zhou L."/>
            <person name="Halpin R."/>
            <person name="Holley T."/>
            <person name="Khouri H.M."/>
            <person name="Feldblyum T.V."/>
            <person name="White O."/>
            <person name="Fraser C.M."/>
            <person name="Chatterjee A.K."/>
            <person name="Cartinhour S."/>
            <person name="Schneider D."/>
            <person name="Mansfield J.W."/>
            <person name="Collmer A."/>
            <person name="Buell R."/>
        </authorList>
    </citation>
    <scope>NUCLEOTIDE SEQUENCE [LARGE SCALE GENOMIC DNA]</scope>
    <source>
        <strain>1448A / Race 6</strain>
    </source>
</reference>
<gene>
    <name evidence="1" type="primary">ubiE</name>
    <name type="ordered locus">PSPPH_0372</name>
</gene>
<dbReference type="EC" id="2.1.1.163" evidence="1"/>
<dbReference type="EC" id="2.1.1.201" evidence="1"/>
<dbReference type="EMBL" id="CP000058">
    <property type="protein sequence ID" value="AAZ33800.1"/>
    <property type="molecule type" value="Genomic_DNA"/>
</dbReference>
<dbReference type="RefSeq" id="WP_002551635.1">
    <property type="nucleotide sequence ID" value="NC_005773.3"/>
</dbReference>
<dbReference type="SMR" id="Q48PJ4"/>
<dbReference type="GeneID" id="96216716"/>
<dbReference type="KEGG" id="psp:PSPPH_0372"/>
<dbReference type="eggNOG" id="COG2226">
    <property type="taxonomic scope" value="Bacteria"/>
</dbReference>
<dbReference type="HOGENOM" id="CLU_037990_0_0_6"/>
<dbReference type="UniPathway" id="UPA00079">
    <property type="reaction ID" value="UER00169"/>
</dbReference>
<dbReference type="UniPathway" id="UPA00232"/>
<dbReference type="Proteomes" id="UP000000551">
    <property type="component" value="Chromosome"/>
</dbReference>
<dbReference type="GO" id="GO:0008425">
    <property type="term" value="F:2-methoxy-6-polyprenyl-1,4-benzoquinol methyltransferase activity"/>
    <property type="evidence" value="ECO:0007669"/>
    <property type="project" value="UniProtKB-UniRule"/>
</dbReference>
<dbReference type="GO" id="GO:0043770">
    <property type="term" value="F:demethylmenaquinone methyltransferase activity"/>
    <property type="evidence" value="ECO:0007669"/>
    <property type="project" value="UniProtKB-UniRule"/>
</dbReference>
<dbReference type="GO" id="GO:0009060">
    <property type="term" value="P:aerobic respiration"/>
    <property type="evidence" value="ECO:0007669"/>
    <property type="project" value="UniProtKB-UniRule"/>
</dbReference>
<dbReference type="GO" id="GO:0009234">
    <property type="term" value="P:menaquinone biosynthetic process"/>
    <property type="evidence" value="ECO:0007669"/>
    <property type="project" value="UniProtKB-UniRule"/>
</dbReference>
<dbReference type="GO" id="GO:0032259">
    <property type="term" value="P:methylation"/>
    <property type="evidence" value="ECO:0007669"/>
    <property type="project" value="UniProtKB-KW"/>
</dbReference>
<dbReference type="CDD" id="cd02440">
    <property type="entry name" value="AdoMet_MTases"/>
    <property type="match status" value="1"/>
</dbReference>
<dbReference type="FunFam" id="3.40.50.150:FF:000014">
    <property type="entry name" value="Ubiquinone/menaquinone biosynthesis C-methyltransferase UbiE"/>
    <property type="match status" value="1"/>
</dbReference>
<dbReference type="Gene3D" id="3.40.50.150">
    <property type="entry name" value="Vaccinia Virus protein VP39"/>
    <property type="match status" value="1"/>
</dbReference>
<dbReference type="HAMAP" id="MF_01813">
    <property type="entry name" value="MenG_UbiE_methyltr"/>
    <property type="match status" value="1"/>
</dbReference>
<dbReference type="InterPro" id="IPR029063">
    <property type="entry name" value="SAM-dependent_MTases_sf"/>
</dbReference>
<dbReference type="InterPro" id="IPR004033">
    <property type="entry name" value="UbiE/COQ5_MeTrFase"/>
</dbReference>
<dbReference type="InterPro" id="IPR023576">
    <property type="entry name" value="UbiE/COQ5_MeTrFase_CS"/>
</dbReference>
<dbReference type="NCBIfam" id="TIGR01934">
    <property type="entry name" value="MenG_MenH_UbiE"/>
    <property type="match status" value="1"/>
</dbReference>
<dbReference type="NCBIfam" id="NF001240">
    <property type="entry name" value="PRK00216.1-1"/>
    <property type="match status" value="1"/>
</dbReference>
<dbReference type="NCBIfam" id="NF001244">
    <property type="entry name" value="PRK00216.1-5"/>
    <property type="match status" value="1"/>
</dbReference>
<dbReference type="PANTHER" id="PTHR43591:SF24">
    <property type="entry name" value="2-METHOXY-6-POLYPRENYL-1,4-BENZOQUINOL METHYLASE, MITOCHONDRIAL"/>
    <property type="match status" value="1"/>
</dbReference>
<dbReference type="PANTHER" id="PTHR43591">
    <property type="entry name" value="METHYLTRANSFERASE"/>
    <property type="match status" value="1"/>
</dbReference>
<dbReference type="Pfam" id="PF01209">
    <property type="entry name" value="Ubie_methyltran"/>
    <property type="match status" value="1"/>
</dbReference>
<dbReference type="SUPFAM" id="SSF53335">
    <property type="entry name" value="S-adenosyl-L-methionine-dependent methyltransferases"/>
    <property type="match status" value="1"/>
</dbReference>
<dbReference type="PROSITE" id="PS51608">
    <property type="entry name" value="SAM_MT_UBIE"/>
    <property type="match status" value="1"/>
</dbReference>
<dbReference type="PROSITE" id="PS01183">
    <property type="entry name" value="UBIE_1"/>
    <property type="match status" value="1"/>
</dbReference>
<dbReference type="PROSITE" id="PS01184">
    <property type="entry name" value="UBIE_2"/>
    <property type="match status" value="1"/>
</dbReference>
<proteinExistence type="inferred from homology"/>
<comment type="function">
    <text evidence="1">Methyltransferase required for the conversion of demethylmenaquinol (DMKH2) to menaquinol (MKH2) and the conversion of 2-polyprenyl-6-methoxy-1,4-benzoquinol (DDMQH2) to 2-polyprenyl-3-methyl-6-methoxy-1,4-benzoquinol (DMQH2).</text>
</comment>
<comment type="catalytic activity">
    <reaction evidence="1">
        <text>a 2-demethylmenaquinol + S-adenosyl-L-methionine = a menaquinol + S-adenosyl-L-homocysteine + H(+)</text>
        <dbReference type="Rhea" id="RHEA:42640"/>
        <dbReference type="Rhea" id="RHEA-COMP:9539"/>
        <dbReference type="Rhea" id="RHEA-COMP:9563"/>
        <dbReference type="ChEBI" id="CHEBI:15378"/>
        <dbReference type="ChEBI" id="CHEBI:18151"/>
        <dbReference type="ChEBI" id="CHEBI:55437"/>
        <dbReference type="ChEBI" id="CHEBI:57856"/>
        <dbReference type="ChEBI" id="CHEBI:59789"/>
        <dbReference type="EC" id="2.1.1.163"/>
    </reaction>
</comment>
<comment type="catalytic activity">
    <reaction evidence="1">
        <text>a 2-methoxy-6-(all-trans-polyprenyl)benzene-1,4-diol + S-adenosyl-L-methionine = a 5-methoxy-2-methyl-3-(all-trans-polyprenyl)benzene-1,4-diol + S-adenosyl-L-homocysteine + H(+)</text>
        <dbReference type="Rhea" id="RHEA:28286"/>
        <dbReference type="Rhea" id="RHEA-COMP:10858"/>
        <dbReference type="Rhea" id="RHEA-COMP:10859"/>
        <dbReference type="ChEBI" id="CHEBI:15378"/>
        <dbReference type="ChEBI" id="CHEBI:57856"/>
        <dbReference type="ChEBI" id="CHEBI:59789"/>
        <dbReference type="ChEBI" id="CHEBI:84166"/>
        <dbReference type="ChEBI" id="CHEBI:84167"/>
        <dbReference type="EC" id="2.1.1.201"/>
    </reaction>
</comment>
<comment type="pathway">
    <text evidence="1">Quinol/quinone metabolism; menaquinone biosynthesis; menaquinol from 1,4-dihydroxy-2-naphthoate: step 2/2.</text>
</comment>
<comment type="pathway">
    <text evidence="1">Cofactor biosynthesis; ubiquinone biosynthesis.</text>
</comment>
<comment type="similarity">
    <text evidence="1">Belongs to the class I-like SAM-binding methyltransferase superfamily. MenG/UbiE family.</text>
</comment>
<sequence>MNDQRKGSDAEPTTHFGYKNVPESQKAEKVAEVFHSVAAKYDLMNDLLSGGMHRLWKRFAIELSGVRTGNRVLDIAGGTGDLTRKFSNLVGPTGQVVLADINASMLKVGRDRLLDLGVSGNVEFVQADAEKLPFPDNHFDCVTIAFGLRNVTHKEDALRSMLRVLKPGGRLLVLEFSKPTNKLMSKAYDAYSFAFMPLMGKLVTNDSESYRYLAESIRMHPNQETLKSMMVEAGFDRVTYHNMTAGVVALHRGIKP</sequence>
<accession>Q48PJ4</accession>
<keyword id="KW-0474">Menaquinone biosynthesis</keyword>
<keyword id="KW-0489">Methyltransferase</keyword>
<keyword id="KW-0949">S-adenosyl-L-methionine</keyword>
<keyword id="KW-0808">Transferase</keyword>
<keyword id="KW-0831">Ubiquinone biosynthesis</keyword>
<name>UBIE_PSE14</name>
<evidence type="ECO:0000255" key="1">
    <source>
        <dbReference type="HAMAP-Rule" id="MF_01813"/>
    </source>
</evidence>
<protein>
    <recommendedName>
        <fullName evidence="1">Ubiquinone/menaquinone biosynthesis C-methyltransferase UbiE</fullName>
        <ecNumber evidence="1">2.1.1.163</ecNumber>
        <ecNumber evidence="1">2.1.1.201</ecNumber>
    </recommendedName>
    <alternativeName>
        <fullName evidence="1">2-methoxy-6-polyprenyl-1,4-benzoquinol methylase</fullName>
    </alternativeName>
    <alternativeName>
        <fullName evidence="1">Demethylmenaquinone methyltransferase</fullName>
    </alternativeName>
</protein>
<organism>
    <name type="scientific">Pseudomonas savastanoi pv. phaseolicola (strain 1448A / Race 6)</name>
    <name type="common">Pseudomonas syringae pv. phaseolicola (strain 1448A / Race 6)</name>
    <dbReference type="NCBI Taxonomy" id="264730"/>
    <lineage>
        <taxon>Bacteria</taxon>
        <taxon>Pseudomonadati</taxon>
        <taxon>Pseudomonadota</taxon>
        <taxon>Gammaproteobacteria</taxon>
        <taxon>Pseudomonadales</taxon>
        <taxon>Pseudomonadaceae</taxon>
        <taxon>Pseudomonas</taxon>
    </lineage>
</organism>
<feature type="chain" id="PRO_1000056270" description="Ubiquinone/menaquinone biosynthesis C-methyltransferase UbiE">
    <location>
        <begin position="1"/>
        <end position="256"/>
    </location>
</feature>
<feature type="binding site" evidence="1">
    <location>
        <position position="79"/>
    </location>
    <ligand>
        <name>S-adenosyl-L-methionine</name>
        <dbReference type="ChEBI" id="CHEBI:59789"/>
    </ligand>
</feature>
<feature type="binding site" evidence="1">
    <location>
        <position position="100"/>
    </location>
    <ligand>
        <name>S-adenosyl-L-methionine</name>
        <dbReference type="ChEBI" id="CHEBI:59789"/>
    </ligand>
</feature>
<feature type="binding site" evidence="1">
    <location>
        <begin position="128"/>
        <end position="129"/>
    </location>
    <ligand>
        <name>S-adenosyl-L-methionine</name>
        <dbReference type="ChEBI" id="CHEBI:59789"/>
    </ligand>
</feature>